<feature type="chain" id="PRO_0000224605" description="Valine--tRNA ligase">
    <location>
        <begin position="1"/>
        <end position="884"/>
    </location>
</feature>
<feature type="coiled-coil region" evidence="1">
    <location>
        <begin position="817"/>
        <end position="884"/>
    </location>
</feature>
<feature type="short sequence motif" description="'HIGH' region">
    <location>
        <begin position="43"/>
        <end position="53"/>
    </location>
</feature>
<feature type="short sequence motif" description="'KMSKS' region">
    <location>
        <begin position="530"/>
        <end position="534"/>
    </location>
</feature>
<feature type="binding site" evidence="1">
    <location>
        <position position="533"/>
    </location>
    <ligand>
        <name>ATP</name>
        <dbReference type="ChEBI" id="CHEBI:30616"/>
    </ligand>
</feature>
<protein>
    <recommendedName>
        <fullName evidence="1">Valine--tRNA ligase</fullName>
        <ecNumber evidence="1">6.1.1.9</ecNumber>
    </recommendedName>
    <alternativeName>
        <fullName evidence="1">Valyl-tRNA synthetase</fullName>
        <shortName evidence="1">ValRS</shortName>
    </alternativeName>
</protein>
<keyword id="KW-0030">Aminoacyl-tRNA synthetase</keyword>
<keyword id="KW-0067">ATP-binding</keyword>
<keyword id="KW-0175">Coiled coil</keyword>
<keyword id="KW-0963">Cytoplasm</keyword>
<keyword id="KW-0436">Ligase</keyword>
<keyword id="KW-0547">Nucleotide-binding</keyword>
<keyword id="KW-0648">Protein biosynthesis</keyword>
<keyword id="KW-1185">Reference proteome</keyword>
<gene>
    <name evidence="1" type="primary">valS</name>
    <name type="ordered locus">ZMO1878</name>
</gene>
<name>SYV_ZYMMO</name>
<proteinExistence type="inferred from homology"/>
<comment type="function">
    <text evidence="1">Catalyzes the attachment of valine to tRNA(Val). As ValRS can inadvertently accommodate and process structurally similar amino acids such as threonine, to avoid such errors, it has a 'posttransfer' editing activity that hydrolyzes mischarged Thr-tRNA(Val) in a tRNA-dependent manner.</text>
</comment>
<comment type="catalytic activity">
    <reaction evidence="1">
        <text>tRNA(Val) + L-valine + ATP = L-valyl-tRNA(Val) + AMP + diphosphate</text>
        <dbReference type="Rhea" id="RHEA:10704"/>
        <dbReference type="Rhea" id="RHEA-COMP:9672"/>
        <dbReference type="Rhea" id="RHEA-COMP:9708"/>
        <dbReference type="ChEBI" id="CHEBI:30616"/>
        <dbReference type="ChEBI" id="CHEBI:33019"/>
        <dbReference type="ChEBI" id="CHEBI:57762"/>
        <dbReference type="ChEBI" id="CHEBI:78442"/>
        <dbReference type="ChEBI" id="CHEBI:78537"/>
        <dbReference type="ChEBI" id="CHEBI:456215"/>
        <dbReference type="EC" id="6.1.1.9"/>
    </reaction>
</comment>
<comment type="subunit">
    <text evidence="1">Monomer.</text>
</comment>
<comment type="subcellular location">
    <subcellularLocation>
        <location evidence="1">Cytoplasm</location>
    </subcellularLocation>
</comment>
<comment type="domain">
    <text evidence="1">ValRS has two distinct active sites: one for aminoacylation and one for editing. The misactivated threonine is translocated from the active site to the editing site.</text>
</comment>
<comment type="domain">
    <text evidence="1">The C-terminal coiled-coil domain is crucial for aminoacylation activity.</text>
</comment>
<comment type="similarity">
    <text evidence="1">Belongs to the class-I aminoacyl-tRNA synthetase family. ValS type 1 subfamily.</text>
</comment>
<dbReference type="EC" id="6.1.1.9" evidence="1"/>
<dbReference type="EMBL" id="AE008692">
    <property type="protein sequence ID" value="AAV90502.2"/>
    <property type="molecule type" value="Genomic_DNA"/>
</dbReference>
<dbReference type="RefSeq" id="WP_011241606.1">
    <property type="nucleotide sequence ID" value="NZ_CP035711.1"/>
</dbReference>
<dbReference type="SMR" id="Q5NLA8"/>
<dbReference type="STRING" id="264203.ZMO1878"/>
<dbReference type="KEGG" id="zmo:ZMO1878"/>
<dbReference type="eggNOG" id="COG0525">
    <property type="taxonomic scope" value="Bacteria"/>
</dbReference>
<dbReference type="HOGENOM" id="CLU_001493_0_2_5"/>
<dbReference type="Proteomes" id="UP000001173">
    <property type="component" value="Chromosome"/>
</dbReference>
<dbReference type="GO" id="GO:0005829">
    <property type="term" value="C:cytosol"/>
    <property type="evidence" value="ECO:0007669"/>
    <property type="project" value="TreeGrafter"/>
</dbReference>
<dbReference type="GO" id="GO:0002161">
    <property type="term" value="F:aminoacyl-tRNA deacylase activity"/>
    <property type="evidence" value="ECO:0007669"/>
    <property type="project" value="InterPro"/>
</dbReference>
<dbReference type="GO" id="GO:0005524">
    <property type="term" value="F:ATP binding"/>
    <property type="evidence" value="ECO:0007669"/>
    <property type="project" value="UniProtKB-UniRule"/>
</dbReference>
<dbReference type="GO" id="GO:0004832">
    <property type="term" value="F:valine-tRNA ligase activity"/>
    <property type="evidence" value="ECO:0007669"/>
    <property type="project" value="UniProtKB-UniRule"/>
</dbReference>
<dbReference type="GO" id="GO:0006438">
    <property type="term" value="P:valyl-tRNA aminoacylation"/>
    <property type="evidence" value="ECO:0007669"/>
    <property type="project" value="UniProtKB-UniRule"/>
</dbReference>
<dbReference type="CDD" id="cd07962">
    <property type="entry name" value="Anticodon_Ia_Val"/>
    <property type="match status" value="1"/>
</dbReference>
<dbReference type="CDD" id="cd00817">
    <property type="entry name" value="ValRS_core"/>
    <property type="match status" value="1"/>
</dbReference>
<dbReference type="FunFam" id="1.10.287.380:FF:000001">
    <property type="entry name" value="Valine--tRNA ligase"/>
    <property type="match status" value="1"/>
</dbReference>
<dbReference type="FunFam" id="3.40.50.620:FF:000032">
    <property type="entry name" value="Valine--tRNA ligase"/>
    <property type="match status" value="1"/>
</dbReference>
<dbReference type="Gene3D" id="3.40.50.620">
    <property type="entry name" value="HUPs"/>
    <property type="match status" value="2"/>
</dbReference>
<dbReference type="Gene3D" id="1.10.730.10">
    <property type="entry name" value="Isoleucyl-tRNA Synthetase, Domain 1"/>
    <property type="match status" value="1"/>
</dbReference>
<dbReference type="Gene3D" id="1.10.287.380">
    <property type="entry name" value="Valyl-tRNA synthetase, C-terminal domain"/>
    <property type="match status" value="1"/>
</dbReference>
<dbReference type="Gene3D" id="3.90.740.10">
    <property type="entry name" value="Valyl/Leucyl/Isoleucyl-tRNA synthetase, editing domain"/>
    <property type="match status" value="1"/>
</dbReference>
<dbReference type="HAMAP" id="MF_02004">
    <property type="entry name" value="Val_tRNA_synth_type1"/>
    <property type="match status" value="1"/>
</dbReference>
<dbReference type="InterPro" id="IPR001412">
    <property type="entry name" value="aa-tRNA-synth_I_CS"/>
</dbReference>
<dbReference type="InterPro" id="IPR002300">
    <property type="entry name" value="aa-tRNA-synth_Ia"/>
</dbReference>
<dbReference type="InterPro" id="IPR033705">
    <property type="entry name" value="Anticodon_Ia_Val"/>
</dbReference>
<dbReference type="InterPro" id="IPR013155">
    <property type="entry name" value="M/V/L/I-tRNA-synth_anticd-bd"/>
</dbReference>
<dbReference type="InterPro" id="IPR014729">
    <property type="entry name" value="Rossmann-like_a/b/a_fold"/>
</dbReference>
<dbReference type="InterPro" id="IPR010978">
    <property type="entry name" value="tRNA-bd_arm"/>
</dbReference>
<dbReference type="InterPro" id="IPR009080">
    <property type="entry name" value="tRNAsynth_Ia_anticodon-bd"/>
</dbReference>
<dbReference type="InterPro" id="IPR037118">
    <property type="entry name" value="Val-tRNA_synth_C_sf"/>
</dbReference>
<dbReference type="InterPro" id="IPR019499">
    <property type="entry name" value="Val-tRNA_synth_tRNA-bd"/>
</dbReference>
<dbReference type="InterPro" id="IPR009008">
    <property type="entry name" value="Val/Leu/Ile-tRNA-synth_edit"/>
</dbReference>
<dbReference type="InterPro" id="IPR002303">
    <property type="entry name" value="Valyl-tRNA_ligase"/>
</dbReference>
<dbReference type="NCBIfam" id="NF004349">
    <property type="entry name" value="PRK05729.1"/>
    <property type="match status" value="1"/>
</dbReference>
<dbReference type="NCBIfam" id="TIGR00422">
    <property type="entry name" value="valS"/>
    <property type="match status" value="1"/>
</dbReference>
<dbReference type="PANTHER" id="PTHR11946:SF93">
    <property type="entry name" value="VALINE--TRNA LIGASE, CHLOROPLASTIC_MITOCHONDRIAL 2"/>
    <property type="match status" value="1"/>
</dbReference>
<dbReference type="PANTHER" id="PTHR11946">
    <property type="entry name" value="VALYL-TRNA SYNTHETASES"/>
    <property type="match status" value="1"/>
</dbReference>
<dbReference type="Pfam" id="PF08264">
    <property type="entry name" value="Anticodon_1"/>
    <property type="match status" value="1"/>
</dbReference>
<dbReference type="Pfam" id="PF00133">
    <property type="entry name" value="tRNA-synt_1"/>
    <property type="match status" value="1"/>
</dbReference>
<dbReference type="Pfam" id="PF10458">
    <property type="entry name" value="Val_tRNA-synt_C"/>
    <property type="match status" value="1"/>
</dbReference>
<dbReference type="PRINTS" id="PR00986">
    <property type="entry name" value="TRNASYNTHVAL"/>
</dbReference>
<dbReference type="SUPFAM" id="SSF47323">
    <property type="entry name" value="Anticodon-binding domain of a subclass of class I aminoacyl-tRNA synthetases"/>
    <property type="match status" value="1"/>
</dbReference>
<dbReference type="SUPFAM" id="SSF52374">
    <property type="entry name" value="Nucleotidylyl transferase"/>
    <property type="match status" value="1"/>
</dbReference>
<dbReference type="SUPFAM" id="SSF46589">
    <property type="entry name" value="tRNA-binding arm"/>
    <property type="match status" value="1"/>
</dbReference>
<dbReference type="SUPFAM" id="SSF50677">
    <property type="entry name" value="ValRS/IleRS/LeuRS editing domain"/>
    <property type="match status" value="1"/>
</dbReference>
<dbReference type="PROSITE" id="PS00178">
    <property type="entry name" value="AA_TRNA_LIGASE_I"/>
    <property type="match status" value="1"/>
</dbReference>
<organism>
    <name type="scientific">Zymomonas mobilis subsp. mobilis (strain ATCC 31821 / ZM4 / CP4)</name>
    <dbReference type="NCBI Taxonomy" id="264203"/>
    <lineage>
        <taxon>Bacteria</taxon>
        <taxon>Pseudomonadati</taxon>
        <taxon>Pseudomonadota</taxon>
        <taxon>Alphaproteobacteria</taxon>
        <taxon>Sphingomonadales</taxon>
        <taxon>Zymomonadaceae</taxon>
        <taxon>Zymomonas</taxon>
    </lineage>
</organism>
<sequence>MTIDKTFDPAAIESRWYTHWEEEGLFHPERPGADPFTLVIPPPNVTGSLHIGHALDDTLQDILVRHARLKGKDALWVVGTDHAGIATQMVVERNLAKIGQKRTDMDRETFVNKVWEWKAESGGTITRQLRRLGASCDWAHERFTMDEGFSKAVIKVFVSLYNEGLIYRDKRLVNWDPHLGTAISDLEVENREVQGHFWHFRYPLEDGSGEIIVATTRPETMLADMAVAVNPEDDRYKALIGKNIRLPITNRLIPIIADIHADPELGSGAVKITPGHDFNDFEVGKRAGIKPADMLNMLDSHARVIQTAENDVPEELIGLDRFEARQIIVEKIDALGLLDKIEDRVIQAPYGDRSGVPIEPWLTDQWYVDAEKLAQPALEAVRSGKIKIIPESWTKTYYNWLENIQPWCISRQLWWGHQIPVWYTDDGQAIVAENEESAQEKAGQGVNLRRDPDVLDTWFSSALWPFATLGWPDTDPKALGRYPNDVLISGFDILFFWDARMIMQGLHFMKDVPFPKLYLHGLVRAADGSKMSKSKGNTVDPLGLIDKYGADALRFTLCAMESQGRDIKLDEKRVEGYRNFATKLWNAVRFAQNNNCAVNTSKQPPEATLTTNRWIIAETAKVARALDQHIEDMRYDELANSLYHFVWNDFCDWYLELIKPILTSTEDQNQGELQETLAVLGWVIDQILIMLHPIMPFITEELWHALGDRDHDLIVAAWPDYKNWSVDETAQNDIDWLIRLITAIRATRSELNVPPALKVPLHSHGIPEKAAHNLERFDPFIKRLARIESIHKEAAPKGAAAQIVVDEATFVLPLEGVIDLDAERGRLKKAIEAVEKEKTATEKRLGNPNFVARAKAEVVAENRERLNNFTGEITKLKAALERLM</sequence>
<reference key="1">
    <citation type="journal article" date="2005" name="Nat. Biotechnol.">
        <title>The genome sequence of the ethanologenic bacterium Zymomonas mobilis ZM4.</title>
        <authorList>
            <person name="Seo J.-S."/>
            <person name="Chong H."/>
            <person name="Park H.S."/>
            <person name="Yoon K.-O."/>
            <person name="Jung C."/>
            <person name="Kim J.J."/>
            <person name="Hong J.H."/>
            <person name="Kim H."/>
            <person name="Kim J.-H."/>
            <person name="Kil J.-I."/>
            <person name="Park C.J."/>
            <person name="Oh H.-M."/>
            <person name="Lee J.-S."/>
            <person name="Jin S.-J."/>
            <person name="Um H.-W."/>
            <person name="Lee H.-J."/>
            <person name="Oh S.-J."/>
            <person name="Kim J.Y."/>
            <person name="Kang H.L."/>
            <person name="Lee S.Y."/>
            <person name="Lee K.J."/>
            <person name="Kang H.S."/>
        </authorList>
    </citation>
    <scope>NUCLEOTIDE SEQUENCE [LARGE SCALE GENOMIC DNA]</scope>
    <source>
        <strain>ATCC 31821 / ZM4 / CP4</strain>
    </source>
</reference>
<reference key="2">
    <citation type="journal article" date="2009" name="Nat. Biotechnol.">
        <title>Improved genome annotation for Zymomonas mobilis.</title>
        <authorList>
            <person name="Yang S."/>
            <person name="Pappas K.M."/>
            <person name="Hauser L.J."/>
            <person name="Land M.L."/>
            <person name="Chen G.L."/>
            <person name="Hurst G.B."/>
            <person name="Pan C."/>
            <person name="Kouvelis V.N."/>
            <person name="Typas M.A."/>
            <person name="Pelletier D.A."/>
            <person name="Klingeman D.M."/>
            <person name="Chang Y.J."/>
            <person name="Samatova N.F."/>
            <person name="Brown S.D."/>
        </authorList>
    </citation>
    <scope>SEQUENCE REVISION</scope>
</reference>
<accession>Q5NLA8</accession>
<evidence type="ECO:0000255" key="1">
    <source>
        <dbReference type="HAMAP-Rule" id="MF_02004"/>
    </source>
</evidence>